<feature type="chain" id="PRO_0000285849" description="Suppressor of cytokine signaling 6">
    <location>
        <begin position="1"/>
        <end position="535"/>
    </location>
</feature>
<feature type="domain" description="SH2" evidence="2">
    <location>
        <begin position="384"/>
        <end position="491"/>
    </location>
</feature>
<feature type="domain" description="SOCS box" evidence="3">
    <location>
        <begin position="486"/>
        <end position="535"/>
    </location>
</feature>
<feature type="region of interest" description="Disordered" evidence="4">
    <location>
        <begin position="80"/>
        <end position="105"/>
    </location>
</feature>
<feature type="compositionally biased region" description="Basic residues" evidence="4">
    <location>
        <begin position="80"/>
        <end position="89"/>
    </location>
</feature>
<accession>Q5RCM6</accession>
<protein>
    <recommendedName>
        <fullName>Suppressor of cytokine signaling 6</fullName>
        <shortName>SOCS-6</shortName>
    </recommendedName>
</protein>
<sequence length="535" mass="59535">MKKISLKTLRKSFNLNKSKEETDFMVVQQPSLASDFGKDDSLFGSCYGKDMASCDINGEDEKGGKNRSKSESLMGTLKRRLSAKQKSKGKAGTPSGSSADEDTFSSSSAPIVFKDVRAQRPIRSTSLRSHHYSPTPWPLRPTNSEETCIKMEVRVKALVHSSSPSPALNGVRKDFHDLQSETACQEQANSLKSSASHNGDLHLHLDEHVPVVIGLMPQDYIQYTVPLDEGMYPLEGSRSYCLDSSSPMEVSAVPPQVGGRSFPEDESQVDQDLVVAPEIFVDQSVNGLLIGTTGVMLQSPRAGQDDVPPLSPLLPPMQNNQIQRNFSGLTGTEAHVAESMRCHLNFDPNSAPGVARVYDSVQSSGPMVVTSLTEELKKLAKQGWYWGPITRWEAEGKLANVPDGSFLVRDSSDDRYLLSLSFRSHGKTLHTRIEHSNGRFSFYEQPDVEGHTSIVDLIEHSIRDSENGAFCYSRSRLPGSATYPVRLTNPVSRFMQVRSLQYLCRFVIRQYTRIDLIQKLPLPNKMKDYLQEKHY</sequence>
<dbReference type="EMBL" id="CR858244">
    <property type="protein sequence ID" value="CAH90481.1"/>
    <property type="molecule type" value="mRNA"/>
</dbReference>
<dbReference type="RefSeq" id="NP_001125251.1">
    <property type="nucleotide sequence ID" value="NM_001131779.1"/>
</dbReference>
<dbReference type="RefSeq" id="XP_024091472.1">
    <property type="nucleotide sequence ID" value="XM_024235704.3"/>
</dbReference>
<dbReference type="RefSeq" id="XP_054393458.1">
    <property type="nucleotide sequence ID" value="XM_054537483.2"/>
</dbReference>
<dbReference type="RefSeq" id="XP_063572834.1">
    <property type="nucleotide sequence ID" value="XM_063716764.1"/>
</dbReference>
<dbReference type="RefSeq" id="XP_063572835.1">
    <property type="nucleotide sequence ID" value="XM_063716765.1"/>
</dbReference>
<dbReference type="SMR" id="Q5RCM6"/>
<dbReference type="FunCoup" id="Q5RCM6">
    <property type="interactions" value="767"/>
</dbReference>
<dbReference type="STRING" id="9601.ENSPPYP00000010362"/>
<dbReference type="Ensembl" id="ENSPPYT00000010774.2">
    <property type="protein sequence ID" value="ENSPPYP00000010362.1"/>
    <property type="gene ID" value="ENSPPYG00000009234.2"/>
</dbReference>
<dbReference type="GeneID" id="100172146"/>
<dbReference type="KEGG" id="pon:100172146"/>
<dbReference type="CTD" id="9306"/>
<dbReference type="eggNOG" id="KOG4566">
    <property type="taxonomic scope" value="Eukaryota"/>
</dbReference>
<dbReference type="GeneTree" id="ENSGT00940000154847"/>
<dbReference type="HOGENOM" id="CLU_038160_0_0_1"/>
<dbReference type="InParanoid" id="Q5RCM6"/>
<dbReference type="OMA" id="PRVNHND"/>
<dbReference type="OrthoDB" id="6270897at2759"/>
<dbReference type="TreeFam" id="TF321368"/>
<dbReference type="UniPathway" id="UPA00143"/>
<dbReference type="Proteomes" id="UP000001595">
    <property type="component" value="Chromosome 18"/>
</dbReference>
<dbReference type="GO" id="GO:0001772">
    <property type="term" value="C:immunological synapse"/>
    <property type="evidence" value="ECO:0007669"/>
    <property type="project" value="Ensembl"/>
</dbReference>
<dbReference type="GO" id="GO:0005942">
    <property type="term" value="C:phosphatidylinositol 3-kinase complex"/>
    <property type="evidence" value="ECO:0007669"/>
    <property type="project" value="TreeGrafter"/>
</dbReference>
<dbReference type="GO" id="GO:0046935">
    <property type="term" value="F:1-phosphatidylinositol-3-kinase regulator activity"/>
    <property type="evidence" value="ECO:0007669"/>
    <property type="project" value="TreeGrafter"/>
</dbReference>
<dbReference type="GO" id="GO:0035556">
    <property type="term" value="P:intracellular signal transduction"/>
    <property type="evidence" value="ECO:0007669"/>
    <property type="project" value="InterPro"/>
</dbReference>
<dbReference type="GO" id="GO:0009968">
    <property type="term" value="P:negative regulation of signal transduction"/>
    <property type="evidence" value="ECO:0007669"/>
    <property type="project" value="UniProtKB-KW"/>
</dbReference>
<dbReference type="GO" id="GO:0050868">
    <property type="term" value="P:negative regulation of T cell activation"/>
    <property type="evidence" value="ECO:0007669"/>
    <property type="project" value="Ensembl"/>
</dbReference>
<dbReference type="GO" id="GO:0046854">
    <property type="term" value="P:phosphatidylinositol phosphate biosynthetic process"/>
    <property type="evidence" value="ECO:0007669"/>
    <property type="project" value="TreeGrafter"/>
</dbReference>
<dbReference type="GO" id="GO:0010498">
    <property type="term" value="P:proteasomal protein catabolic process"/>
    <property type="evidence" value="ECO:0007669"/>
    <property type="project" value="Ensembl"/>
</dbReference>
<dbReference type="GO" id="GO:0016567">
    <property type="term" value="P:protein ubiquitination"/>
    <property type="evidence" value="ECO:0007669"/>
    <property type="project" value="UniProtKB-UniPathway"/>
</dbReference>
<dbReference type="GO" id="GO:0040008">
    <property type="term" value="P:regulation of growth"/>
    <property type="evidence" value="ECO:0007669"/>
    <property type="project" value="Ensembl"/>
</dbReference>
<dbReference type="CDD" id="cd10387">
    <property type="entry name" value="SH2_SOCS6"/>
    <property type="match status" value="1"/>
</dbReference>
<dbReference type="CDD" id="cd03740">
    <property type="entry name" value="SOCS_SOCS6"/>
    <property type="match status" value="1"/>
</dbReference>
<dbReference type="FunFam" id="1.10.750.20:FF:000002">
    <property type="entry name" value="Suppressor of cytokine signaling 2"/>
    <property type="match status" value="1"/>
</dbReference>
<dbReference type="FunFam" id="3.30.505.10:FF:000036">
    <property type="entry name" value="Suppressor of cytokine signaling 6"/>
    <property type="match status" value="1"/>
</dbReference>
<dbReference type="Gene3D" id="3.30.505.10">
    <property type="entry name" value="SH2 domain"/>
    <property type="match status" value="1"/>
</dbReference>
<dbReference type="Gene3D" id="1.10.750.20">
    <property type="entry name" value="SOCS box"/>
    <property type="match status" value="1"/>
</dbReference>
<dbReference type="InterPro" id="IPR000980">
    <property type="entry name" value="SH2"/>
</dbReference>
<dbReference type="InterPro" id="IPR036860">
    <property type="entry name" value="SH2_dom_sf"/>
</dbReference>
<dbReference type="InterPro" id="IPR035865">
    <property type="entry name" value="SOCS6_SH2"/>
</dbReference>
<dbReference type="InterPro" id="IPR037345">
    <property type="entry name" value="SOCS6_SOCS"/>
</dbReference>
<dbReference type="InterPro" id="IPR001496">
    <property type="entry name" value="SOCS_box"/>
</dbReference>
<dbReference type="InterPro" id="IPR036036">
    <property type="entry name" value="SOCS_box-like_dom_sf"/>
</dbReference>
<dbReference type="PANTHER" id="PTHR10155">
    <property type="entry name" value="PHOSPHATIDYLINOSITOL 3-KINASE REGULATORY SUBUNIT"/>
    <property type="match status" value="1"/>
</dbReference>
<dbReference type="PANTHER" id="PTHR10155:SF28">
    <property type="entry name" value="SUPPRESSOR OF CYTOKINE SIGNALING 6"/>
    <property type="match status" value="1"/>
</dbReference>
<dbReference type="Pfam" id="PF00017">
    <property type="entry name" value="SH2"/>
    <property type="match status" value="1"/>
</dbReference>
<dbReference type="Pfam" id="PF07525">
    <property type="entry name" value="SOCS_box"/>
    <property type="match status" value="1"/>
</dbReference>
<dbReference type="SMART" id="SM00252">
    <property type="entry name" value="SH2"/>
    <property type="match status" value="1"/>
</dbReference>
<dbReference type="SMART" id="SM00253">
    <property type="entry name" value="SOCS"/>
    <property type="match status" value="1"/>
</dbReference>
<dbReference type="SMART" id="SM00969">
    <property type="entry name" value="SOCS_box"/>
    <property type="match status" value="1"/>
</dbReference>
<dbReference type="SUPFAM" id="SSF55550">
    <property type="entry name" value="SH2 domain"/>
    <property type="match status" value="1"/>
</dbReference>
<dbReference type="SUPFAM" id="SSF158235">
    <property type="entry name" value="SOCS box-like"/>
    <property type="match status" value="1"/>
</dbReference>
<dbReference type="PROSITE" id="PS50001">
    <property type="entry name" value="SH2"/>
    <property type="match status" value="1"/>
</dbReference>
<dbReference type="PROSITE" id="PS50225">
    <property type="entry name" value="SOCS"/>
    <property type="match status" value="1"/>
</dbReference>
<organism>
    <name type="scientific">Pongo abelii</name>
    <name type="common">Sumatran orangutan</name>
    <name type="synonym">Pongo pygmaeus abelii</name>
    <dbReference type="NCBI Taxonomy" id="9601"/>
    <lineage>
        <taxon>Eukaryota</taxon>
        <taxon>Metazoa</taxon>
        <taxon>Chordata</taxon>
        <taxon>Craniata</taxon>
        <taxon>Vertebrata</taxon>
        <taxon>Euteleostomi</taxon>
        <taxon>Mammalia</taxon>
        <taxon>Eutheria</taxon>
        <taxon>Euarchontoglires</taxon>
        <taxon>Primates</taxon>
        <taxon>Haplorrhini</taxon>
        <taxon>Catarrhini</taxon>
        <taxon>Hominidae</taxon>
        <taxon>Pongo</taxon>
    </lineage>
</organism>
<keyword id="KW-0341">Growth regulation</keyword>
<keyword id="KW-1185">Reference proteome</keyword>
<keyword id="KW-0727">SH2 domain</keyword>
<keyword id="KW-0734">Signal transduction inhibitor</keyword>
<keyword id="KW-0833">Ubl conjugation pathway</keyword>
<gene>
    <name type="primary">SOCS6</name>
</gene>
<comment type="function">
    <text evidence="1">SOCS family proteins form part of a classical negative feedback system that regulates cytokine signal transduction. May be a substrate recognition component of a SCF-like ECS (Elongin BC-CUL2/5-SOCS-box protein) E3 ubiquitin-protein ligase complex which mediates the ubiquitination and subsequent proteasomal degradation of target proteins. Regulates KIT degradation by ubiquitination of the tyrosine-phosphorylated receptor (By similarity).</text>
</comment>
<comment type="pathway">
    <text>Protein modification; protein ubiquitination.</text>
</comment>
<comment type="subunit">
    <text evidence="1">Interacts with RBCK1. Interacts with phosphorylated IRS4. Interacts with KIT (phosphorylated). Interacts with PIM3 (By similarity).</text>
</comment>
<comment type="domain">
    <text evidence="1">The SOCS box domain mediates the interaction with the Elongin BC complex, an adapter module in different E3 ubiquitin ligase complexes.</text>
</comment>
<evidence type="ECO:0000250" key="1"/>
<evidence type="ECO:0000255" key="2">
    <source>
        <dbReference type="PROSITE-ProRule" id="PRU00191"/>
    </source>
</evidence>
<evidence type="ECO:0000255" key="3">
    <source>
        <dbReference type="PROSITE-ProRule" id="PRU00194"/>
    </source>
</evidence>
<evidence type="ECO:0000256" key="4">
    <source>
        <dbReference type="SAM" id="MobiDB-lite"/>
    </source>
</evidence>
<reference key="1">
    <citation type="submission" date="2004-11" db="EMBL/GenBank/DDBJ databases">
        <authorList>
            <consortium name="The German cDNA consortium"/>
        </authorList>
    </citation>
    <scope>NUCLEOTIDE SEQUENCE [LARGE SCALE MRNA]</scope>
    <source>
        <tissue>Kidney</tissue>
    </source>
</reference>
<proteinExistence type="evidence at transcript level"/>
<name>SOCS6_PONAB</name>